<proteinExistence type="evidence at transcript level"/>
<organism>
    <name type="scientific">Picea sitchensis</name>
    <name type="common">Sitka spruce</name>
    <name type="synonym">Pinus sitchensis</name>
    <dbReference type="NCBI Taxonomy" id="3332"/>
    <lineage>
        <taxon>Eukaryota</taxon>
        <taxon>Viridiplantae</taxon>
        <taxon>Streptophyta</taxon>
        <taxon>Embryophyta</taxon>
        <taxon>Tracheophyta</taxon>
        <taxon>Spermatophyta</taxon>
        <taxon>Pinopsida</taxon>
        <taxon>Pinidae</taxon>
        <taxon>Conifers I</taxon>
        <taxon>Pinales</taxon>
        <taxon>Pinaceae</taxon>
        <taxon>Picea</taxon>
    </lineage>
</organism>
<comment type="subunit">
    <text evidence="1">Homodimer and heterodimers.</text>
</comment>
<comment type="subcellular location">
    <subcellularLocation>
        <location evidence="1">Cell membrane</location>
        <topology evidence="1">Multi-pass membrane protein</topology>
    </subcellularLocation>
</comment>
<comment type="similarity">
    <text evidence="3">Belongs to the Casparian strip membrane proteins (CASP) family.</text>
</comment>
<accession>D5A8E6</accession>
<keyword id="KW-1003">Cell membrane</keyword>
<keyword id="KW-0472">Membrane</keyword>
<keyword id="KW-0812">Transmembrane</keyword>
<keyword id="KW-1133">Transmembrane helix</keyword>
<name>CSPL4_PICSI</name>
<reference key="1">
    <citation type="submission" date="2010-04" db="EMBL/GenBank/DDBJ databases">
        <title>Full length sequence-verified cDNA sequences from Sitka spruce buds (Picea sitchensis).</title>
        <authorList>
            <person name="Reid K.E."/>
            <person name="Liao N."/>
            <person name="Chan S."/>
            <person name="Docking R."/>
            <person name="Taylor G."/>
            <person name="Moore R."/>
            <person name="Mayo M."/>
            <person name="Munro S."/>
            <person name="King J."/>
            <person name="Yanchuk A."/>
            <person name="Holt R."/>
            <person name="Jones S."/>
            <person name="Marra M."/>
            <person name="Ritland C.E."/>
            <person name="Ritland K."/>
            <person name="Bohlmann J."/>
        </authorList>
    </citation>
    <scope>NUCLEOTIDE SEQUENCE [LARGE SCALE MRNA]</scope>
    <source>
        <strain>cv. FB3-425</strain>
        <tissue>Axillary bud</tissue>
    </source>
</reference>
<reference key="2">
    <citation type="journal article" date="2014" name="Plant Physiol.">
        <title>Functional and evolutionary analysis of the CASPARIAN STRIP MEMBRANE DOMAIN PROTEIN family.</title>
        <authorList>
            <person name="Roppolo D."/>
            <person name="Boeckmann B."/>
            <person name="Pfister A."/>
            <person name="Boutet E."/>
            <person name="Rubio M.C."/>
            <person name="Denervaud-Tendon V."/>
            <person name="Vermeer J.E."/>
            <person name="Gheyselinck J."/>
            <person name="Xenarios I."/>
            <person name="Geldner N."/>
        </authorList>
    </citation>
    <scope>GENE FAMILY</scope>
    <scope>NOMENCLATURE</scope>
</reference>
<evidence type="ECO:0000250" key="1"/>
<evidence type="ECO:0000255" key="2"/>
<evidence type="ECO:0000305" key="3"/>
<feature type="chain" id="PRO_0000412032" description="CASP-like protein 2BC1">
    <location>
        <begin position="1"/>
        <end position="226"/>
    </location>
</feature>
<feature type="topological domain" description="Cytoplasmic" evidence="2">
    <location>
        <begin position="1"/>
        <end position="37"/>
    </location>
</feature>
<feature type="transmembrane region" description="Helical" evidence="2">
    <location>
        <begin position="38"/>
        <end position="58"/>
    </location>
</feature>
<feature type="topological domain" description="Extracellular" evidence="2">
    <location>
        <begin position="59"/>
        <end position="78"/>
    </location>
</feature>
<feature type="transmembrane region" description="Helical" evidence="2">
    <location>
        <begin position="79"/>
        <end position="99"/>
    </location>
</feature>
<feature type="topological domain" description="Cytoplasmic" evidence="2">
    <location>
        <begin position="100"/>
        <end position="114"/>
    </location>
</feature>
<feature type="transmembrane region" description="Helical" evidence="2">
    <location>
        <begin position="115"/>
        <end position="135"/>
    </location>
</feature>
<feature type="topological domain" description="Extracellular" evidence="2">
    <location>
        <begin position="136"/>
        <end position="170"/>
    </location>
</feature>
<feature type="transmembrane region" description="Helical" evidence="2">
    <location>
        <begin position="171"/>
        <end position="191"/>
    </location>
</feature>
<feature type="topological domain" description="Cytoplasmic" evidence="2">
    <location>
        <begin position="192"/>
        <end position="226"/>
    </location>
</feature>
<dbReference type="EMBL" id="BT122436">
    <property type="protein sequence ID" value="ADE75815.1"/>
    <property type="molecule type" value="mRNA"/>
</dbReference>
<dbReference type="GO" id="GO:0005886">
    <property type="term" value="C:plasma membrane"/>
    <property type="evidence" value="ECO:0007669"/>
    <property type="project" value="UniProtKB-SubCell"/>
</dbReference>
<dbReference type="InterPro" id="IPR006459">
    <property type="entry name" value="CASP/CASPL"/>
</dbReference>
<dbReference type="InterPro" id="IPR006702">
    <property type="entry name" value="CASP_dom"/>
</dbReference>
<dbReference type="NCBIfam" id="TIGR01569">
    <property type="entry name" value="A_tha_TIGR01569"/>
    <property type="match status" value="1"/>
</dbReference>
<dbReference type="PANTHER" id="PTHR33573:SF64">
    <property type="entry name" value="CASP-LIKE PROTEIN 2B1"/>
    <property type="match status" value="1"/>
</dbReference>
<dbReference type="PANTHER" id="PTHR33573">
    <property type="entry name" value="CASP-LIKE PROTEIN 4A4"/>
    <property type="match status" value="1"/>
</dbReference>
<dbReference type="Pfam" id="PF04535">
    <property type="entry name" value="CASP_dom"/>
    <property type="match status" value="1"/>
</dbReference>
<sequence>MRKHIDIVFSRLSGPILNPPPDNNVIPKTDRKLRITEVILRFAVVIFALVSAIMVGTASGTRDLGGGIRIHAHFTLLKTLPFLVIVDGILAVYSLLQGLRCFLSLYMRHILLNKALAWTIFCCDQALAYVIFAAAASTAETAYISEQGLDELQWIKVCMFFRAYCFKSGAGMINAFLAALCMVFVSGMSVFHLFRLYGEKRAYGHIAEQVVISEEAAERRNSLNGI</sequence>
<protein>
    <recommendedName>
        <fullName>CASP-like protein 2BC1</fullName>
        <shortName>PsCASPL2BC1</shortName>
    </recommendedName>
</protein>